<name>ACEA_PINTA</name>
<proteinExistence type="evidence at transcript level"/>
<accession>Q43097</accession>
<reference key="1">
    <citation type="journal article" date="1997" name="Plant Mol. Biol.">
        <title>Regulation of two loblolly pine (Pinus taeda L.) isocitrate lyase genes in megagametophytes of mature and stratified seeds and during postgerminative growth.</title>
        <authorList>
            <person name="Mullen R.T."/>
            <person name="Gifford D.J."/>
        </authorList>
    </citation>
    <scope>NUCLEOTIDE SEQUENCE [MRNA]</scope>
</reference>
<organism>
    <name type="scientific">Pinus taeda</name>
    <name type="common">Loblolly pine</name>
    <dbReference type="NCBI Taxonomy" id="3352"/>
    <lineage>
        <taxon>Eukaryota</taxon>
        <taxon>Viridiplantae</taxon>
        <taxon>Streptophyta</taxon>
        <taxon>Embryophyta</taxon>
        <taxon>Tracheophyta</taxon>
        <taxon>Spermatophyta</taxon>
        <taxon>Pinopsida</taxon>
        <taxon>Pinidae</taxon>
        <taxon>Conifers I</taxon>
        <taxon>Pinales</taxon>
        <taxon>Pinaceae</taxon>
        <taxon>Pinus</taxon>
        <taxon>Pinus subgen. Pinus</taxon>
    </lineage>
</organism>
<protein>
    <recommendedName>
        <fullName evidence="1">Isocitrate lyase</fullName>
        <shortName evidence="1">ICL</shortName>
        <ecNumber evidence="1">4.1.3.1</ecNumber>
    </recommendedName>
    <alternativeName>
        <fullName evidence="1">Isocitrase</fullName>
    </alternativeName>
    <alternativeName>
        <fullName evidence="1">Isocitratsysase</fullName>
    </alternativeName>
</protein>
<dbReference type="EC" id="4.1.3.1" evidence="1"/>
<dbReference type="EMBL" id="U39807">
    <property type="protein sequence ID" value="AAC49687.1"/>
    <property type="molecule type" value="mRNA"/>
</dbReference>
<dbReference type="PIR" id="T09779">
    <property type="entry name" value="T09779"/>
</dbReference>
<dbReference type="SMR" id="Q43097"/>
<dbReference type="UniPathway" id="UPA00703">
    <property type="reaction ID" value="UER00719"/>
</dbReference>
<dbReference type="GO" id="GO:0009514">
    <property type="term" value="C:glyoxysome"/>
    <property type="evidence" value="ECO:0007669"/>
    <property type="project" value="UniProtKB-SubCell"/>
</dbReference>
<dbReference type="GO" id="GO:0004451">
    <property type="term" value="F:isocitrate lyase activity"/>
    <property type="evidence" value="ECO:0007669"/>
    <property type="project" value="UniProtKB-EC"/>
</dbReference>
<dbReference type="GO" id="GO:0046872">
    <property type="term" value="F:metal ion binding"/>
    <property type="evidence" value="ECO:0007669"/>
    <property type="project" value="UniProtKB-KW"/>
</dbReference>
<dbReference type="GO" id="GO:0006097">
    <property type="term" value="P:glyoxylate cycle"/>
    <property type="evidence" value="ECO:0007669"/>
    <property type="project" value="UniProtKB-UniPathway"/>
</dbReference>
<dbReference type="GO" id="GO:0006099">
    <property type="term" value="P:tricarboxylic acid cycle"/>
    <property type="evidence" value="ECO:0007669"/>
    <property type="project" value="UniProtKB-KW"/>
</dbReference>
<dbReference type="CDD" id="cd00377">
    <property type="entry name" value="ICL_PEPM"/>
    <property type="match status" value="1"/>
</dbReference>
<dbReference type="FunFam" id="1.10.10.850:FF:000001">
    <property type="entry name" value="Isocitrate lyase"/>
    <property type="match status" value="1"/>
</dbReference>
<dbReference type="Gene3D" id="1.10.10.850">
    <property type="match status" value="1"/>
</dbReference>
<dbReference type="Gene3D" id="3.20.20.60">
    <property type="entry name" value="Phosphoenolpyruvate-binding domains"/>
    <property type="match status" value="1"/>
</dbReference>
<dbReference type="InterPro" id="IPR039556">
    <property type="entry name" value="ICL/PEPM"/>
</dbReference>
<dbReference type="InterPro" id="IPR006254">
    <property type="entry name" value="Isocitrate_lyase"/>
</dbReference>
<dbReference type="InterPro" id="IPR018523">
    <property type="entry name" value="Isocitrate_lyase_ph_CS"/>
</dbReference>
<dbReference type="InterPro" id="IPR015813">
    <property type="entry name" value="Pyrv/PenolPyrv_kinase-like_dom"/>
</dbReference>
<dbReference type="InterPro" id="IPR040442">
    <property type="entry name" value="Pyrv_kinase-like_dom_sf"/>
</dbReference>
<dbReference type="NCBIfam" id="TIGR01346">
    <property type="entry name" value="isocit_lyase"/>
    <property type="match status" value="1"/>
</dbReference>
<dbReference type="PANTHER" id="PTHR21631:SF3">
    <property type="entry name" value="BIFUNCTIONAL GLYOXYLATE CYCLE PROTEIN"/>
    <property type="match status" value="1"/>
</dbReference>
<dbReference type="PANTHER" id="PTHR21631">
    <property type="entry name" value="ISOCITRATE LYASE/MALATE SYNTHASE"/>
    <property type="match status" value="1"/>
</dbReference>
<dbReference type="Pfam" id="PF00463">
    <property type="entry name" value="ICL"/>
    <property type="match status" value="1"/>
</dbReference>
<dbReference type="PIRSF" id="PIRSF001362">
    <property type="entry name" value="Isocit_lyase"/>
    <property type="match status" value="1"/>
</dbReference>
<dbReference type="SUPFAM" id="SSF51621">
    <property type="entry name" value="Phosphoenolpyruvate/pyruvate domain"/>
    <property type="match status" value="1"/>
</dbReference>
<dbReference type="PROSITE" id="PS00161">
    <property type="entry name" value="ISOCITRATE_LYASE"/>
    <property type="match status" value="1"/>
</dbReference>
<evidence type="ECO:0000250" key="1">
    <source>
        <dbReference type="UniProtKB" id="P28297"/>
    </source>
</evidence>
<evidence type="ECO:0000250" key="2">
    <source>
        <dbReference type="UniProtKB" id="P9WKK7"/>
    </source>
</evidence>
<evidence type="ECO:0000255" key="3"/>
<evidence type="ECO:0000305" key="4"/>
<gene>
    <name type="primary">ICL 8</name>
</gene>
<keyword id="KW-0329">Glyoxylate bypass</keyword>
<keyword id="KW-0330">Glyoxysome</keyword>
<keyword id="KW-0456">Lyase</keyword>
<keyword id="KW-0460">Magnesium</keyword>
<keyword id="KW-0479">Metal-binding</keyword>
<keyword id="KW-0576">Peroxisome</keyword>
<keyword id="KW-0816">Tricarboxylic acid cycle</keyword>
<comment type="function">
    <text evidence="1">Involved in storage lipid mobilization during the growth of higher plant seedling.</text>
</comment>
<comment type="catalytic activity">
    <reaction evidence="1">
        <text>D-threo-isocitrate = glyoxylate + succinate</text>
        <dbReference type="Rhea" id="RHEA:13245"/>
        <dbReference type="ChEBI" id="CHEBI:15562"/>
        <dbReference type="ChEBI" id="CHEBI:30031"/>
        <dbReference type="ChEBI" id="CHEBI:36655"/>
        <dbReference type="EC" id="4.1.3.1"/>
    </reaction>
</comment>
<comment type="cofactor">
    <cofactor evidence="2">
        <name>Mg(2+)</name>
        <dbReference type="ChEBI" id="CHEBI:18420"/>
    </cofactor>
</comment>
<comment type="pathway">
    <text evidence="1">Carbohydrate metabolism; glyoxylate cycle; (S)-malate from isocitrate: step 1/2.</text>
</comment>
<comment type="subunit">
    <text evidence="1">Homotetramer.</text>
</comment>
<comment type="subcellular location">
    <subcellularLocation>
        <location evidence="1">Glyoxysome</location>
    </subcellularLocation>
</comment>
<comment type="similarity">
    <text evidence="4">Belongs to the isocitrate lyase/PEP mutase superfamily. Isocitrate lyase family.</text>
</comment>
<feature type="chain" id="PRO_0000068809" description="Isocitrate lyase">
    <location>
        <begin position="1"/>
        <end position="580"/>
    </location>
</feature>
<feature type="short sequence motif" description="Microbody targeting signal" evidence="3">
    <location>
        <begin position="578"/>
        <end position="580"/>
    </location>
</feature>
<feature type="active site" description="Proton acceptor" evidence="2">
    <location>
        <position position="215"/>
    </location>
</feature>
<feature type="binding site" evidence="2">
    <location>
        <begin position="106"/>
        <end position="108"/>
    </location>
    <ligand>
        <name>substrate</name>
    </ligand>
</feature>
<feature type="binding site" evidence="2">
    <location>
        <position position="177"/>
    </location>
    <ligand>
        <name>Mg(2+)</name>
        <dbReference type="ChEBI" id="CHEBI:18420"/>
    </ligand>
</feature>
<feature type="binding site" evidence="2">
    <location>
        <begin position="216"/>
        <end position="217"/>
    </location>
    <ligand>
        <name>substrate</name>
    </ligand>
</feature>
<feature type="binding site" evidence="2">
    <location>
        <position position="252"/>
    </location>
    <ligand>
        <name>substrate</name>
    </ligand>
</feature>
<feature type="binding site" evidence="2">
    <location>
        <begin position="441"/>
        <end position="445"/>
    </location>
    <ligand>
        <name>substrate</name>
    </ligand>
</feature>
<feature type="binding site" evidence="2">
    <location>
        <position position="476"/>
    </location>
    <ligand>
        <name>substrate</name>
    </ligand>
</feature>
<sequence length="580" mass="64676">MAIYSAQAPNSILEEEARFEAEVSETQAWWNSTDLFRLTRRPYTARDVVRLRGSMRQSYASNEMAKKLWRTLKTHQANKTASRTFGALDPVQVSMMAKYLDSIYVSGWQCSSTHTTTNEPGPDLADYPYDTVPNKVEHLFFAQQFHDRKQKEARMSMTREERSKTPYIDYLKPIIADGDTGFGGATATVKLCKLFVERGAAGVHIEDQASVTKKCGHMAGKVLVSVGEHVNRMVAARLQFDIMGVETLLVARTDAVAATLIQTNVDARDHQFILGATNPNLKGKPLADVLARAMASGKSGADLQAVEDEWMAMADLKLFSDCVVDGIKALNVSEQEKGRRLGEWMQQTGGNTGNVLSYYQAKELAEKLGISNLFWDWDLPRTREGFYRFQGSVKAAIVRGWAFGPHADIIWMETSSPDMVECRDFALGVKSKHPEIMLAYNLSPSFNWDASRMTDEQMKNFIPEIARLGYCWQFITLAGFHADALVIDTFAKDFAQRGMLAYVEKIQRQEMMNGVDTLAHQKWSGANYYDQLLKTVQGGISATAAMAKGVTEDQFEETQSSTLALESNIGAGTVLAKSRM</sequence>